<proteinExistence type="inferred from homology"/>
<gene>
    <name evidence="1" type="primary">pnp</name>
    <name type="ordered locus">BURPS1106A_1294</name>
</gene>
<sequence>MSLFNKIVKEFQWGQHKVRLETGEIARQASGAVIVDIEDTVVLATVVGAKSAKPGQDFFPLTVDYIEKTYSAGKIPGGFFRREGRPSEHETLTSRLIDRPLRPLFPEGFYNEVQVVIHVLSVNPEIPADIPALIGASAALAVSGLPFNGPVGAARVAYVNNEYVLNPTREQIKASRLDLVVAGTERAVLMVESEADQLPEDVMLGAVVFGHEQMQTAIDAIHELVREGGKPEWDWQPAPKDEALNARVTELAQPELLAAYQIRDKQARSTKLKEVYAATSAKLEEEAVAAGTVAADKATVGNILFDLEAKIVRGQILNGEPRIDGRDTRTVRPIEIRTGVLPRTHGSALFTRGETQALVVATLGTKGDEQIIDALEGEYRERFMLHYNMPPFATGETGRVGSPKRREIGHGRLAKRALVACLPSADEFGYSIRVVSEITESNGSSSMASVCGGCLALMDAGVPMKAHVAGIAMGLILEGNKFAVLTDILGDEDHLGDMDFKVAGTADGVTALQMDIKIQGITKEIMQVALAQAKEGRMHILGKMKDAVAGANTQLSEFAPRMITIKINPEKIRDVIGKGGSVIRALTEETGTTIDISDDGVVTIASTNSEGMAEAKKRIENITAEIEVGHVYEGTVLKLLDFGAIVNLLPGKDGLLHISEIVNERVKDINDYLKEGQQVKVKVIQTDEKGRVRLSAKALLNEAAAQADTPPQQ</sequence>
<accession>A3NTA2</accession>
<organism>
    <name type="scientific">Burkholderia pseudomallei (strain 1106a)</name>
    <dbReference type="NCBI Taxonomy" id="357348"/>
    <lineage>
        <taxon>Bacteria</taxon>
        <taxon>Pseudomonadati</taxon>
        <taxon>Pseudomonadota</taxon>
        <taxon>Betaproteobacteria</taxon>
        <taxon>Burkholderiales</taxon>
        <taxon>Burkholderiaceae</taxon>
        <taxon>Burkholderia</taxon>
        <taxon>pseudomallei group</taxon>
    </lineage>
</organism>
<protein>
    <recommendedName>
        <fullName evidence="1">Polyribonucleotide nucleotidyltransferase</fullName>
        <ecNumber evidence="1">2.7.7.8</ecNumber>
    </recommendedName>
    <alternativeName>
        <fullName evidence="1">Polynucleotide phosphorylase</fullName>
        <shortName evidence="1">PNPase</shortName>
    </alternativeName>
</protein>
<name>PNP_BURP0</name>
<reference key="1">
    <citation type="journal article" date="2010" name="Genome Biol. Evol.">
        <title>Continuing evolution of Burkholderia mallei through genome reduction and large-scale rearrangements.</title>
        <authorList>
            <person name="Losada L."/>
            <person name="Ronning C.M."/>
            <person name="DeShazer D."/>
            <person name="Woods D."/>
            <person name="Fedorova N."/>
            <person name="Kim H.S."/>
            <person name="Shabalina S.A."/>
            <person name="Pearson T.R."/>
            <person name="Brinkac L."/>
            <person name="Tan P."/>
            <person name="Nandi T."/>
            <person name="Crabtree J."/>
            <person name="Badger J."/>
            <person name="Beckstrom-Sternberg S."/>
            <person name="Saqib M."/>
            <person name="Schutzer S.E."/>
            <person name="Keim P."/>
            <person name="Nierman W.C."/>
        </authorList>
    </citation>
    <scope>NUCLEOTIDE SEQUENCE [LARGE SCALE GENOMIC DNA]</scope>
    <source>
        <strain>1106a</strain>
    </source>
</reference>
<evidence type="ECO:0000255" key="1">
    <source>
        <dbReference type="HAMAP-Rule" id="MF_01595"/>
    </source>
</evidence>
<feature type="chain" id="PRO_0000329559" description="Polyribonucleotide nucleotidyltransferase">
    <location>
        <begin position="1"/>
        <end position="713"/>
    </location>
</feature>
<feature type="domain" description="KH" evidence="1">
    <location>
        <begin position="560"/>
        <end position="619"/>
    </location>
</feature>
<feature type="domain" description="S1 motif" evidence="1">
    <location>
        <begin position="629"/>
        <end position="697"/>
    </location>
</feature>
<feature type="binding site" evidence="1">
    <location>
        <position position="493"/>
    </location>
    <ligand>
        <name>Mg(2+)</name>
        <dbReference type="ChEBI" id="CHEBI:18420"/>
    </ligand>
</feature>
<feature type="binding site" evidence="1">
    <location>
        <position position="499"/>
    </location>
    <ligand>
        <name>Mg(2+)</name>
        <dbReference type="ChEBI" id="CHEBI:18420"/>
    </ligand>
</feature>
<keyword id="KW-0963">Cytoplasm</keyword>
<keyword id="KW-0460">Magnesium</keyword>
<keyword id="KW-0479">Metal-binding</keyword>
<keyword id="KW-0548">Nucleotidyltransferase</keyword>
<keyword id="KW-0694">RNA-binding</keyword>
<keyword id="KW-0808">Transferase</keyword>
<dbReference type="EC" id="2.7.7.8" evidence="1"/>
<dbReference type="EMBL" id="CP000572">
    <property type="protein sequence ID" value="ABN92100.1"/>
    <property type="molecule type" value="Genomic_DNA"/>
</dbReference>
<dbReference type="RefSeq" id="WP_004526459.1">
    <property type="nucleotide sequence ID" value="NC_009076.1"/>
</dbReference>
<dbReference type="SMR" id="A3NTA2"/>
<dbReference type="GeneID" id="93059689"/>
<dbReference type="KEGG" id="bpl:BURPS1106A_1294"/>
<dbReference type="HOGENOM" id="CLU_004217_2_2_4"/>
<dbReference type="Proteomes" id="UP000006738">
    <property type="component" value="Chromosome I"/>
</dbReference>
<dbReference type="GO" id="GO:0005829">
    <property type="term" value="C:cytosol"/>
    <property type="evidence" value="ECO:0007669"/>
    <property type="project" value="TreeGrafter"/>
</dbReference>
<dbReference type="GO" id="GO:0000175">
    <property type="term" value="F:3'-5'-RNA exonuclease activity"/>
    <property type="evidence" value="ECO:0007669"/>
    <property type="project" value="TreeGrafter"/>
</dbReference>
<dbReference type="GO" id="GO:0000287">
    <property type="term" value="F:magnesium ion binding"/>
    <property type="evidence" value="ECO:0007669"/>
    <property type="project" value="UniProtKB-UniRule"/>
</dbReference>
<dbReference type="GO" id="GO:0004654">
    <property type="term" value="F:polyribonucleotide nucleotidyltransferase activity"/>
    <property type="evidence" value="ECO:0007669"/>
    <property type="project" value="UniProtKB-UniRule"/>
</dbReference>
<dbReference type="GO" id="GO:0003723">
    <property type="term" value="F:RNA binding"/>
    <property type="evidence" value="ECO:0007669"/>
    <property type="project" value="UniProtKB-UniRule"/>
</dbReference>
<dbReference type="GO" id="GO:0006402">
    <property type="term" value="P:mRNA catabolic process"/>
    <property type="evidence" value="ECO:0007669"/>
    <property type="project" value="UniProtKB-UniRule"/>
</dbReference>
<dbReference type="GO" id="GO:0006396">
    <property type="term" value="P:RNA processing"/>
    <property type="evidence" value="ECO:0007669"/>
    <property type="project" value="InterPro"/>
</dbReference>
<dbReference type="CDD" id="cd02393">
    <property type="entry name" value="KH-I_PNPase"/>
    <property type="match status" value="1"/>
</dbReference>
<dbReference type="CDD" id="cd11363">
    <property type="entry name" value="RNase_PH_PNPase_1"/>
    <property type="match status" value="1"/>
</dbReference>
<dbReference type="CDD" id="cd11364">
    <property type="entry name" value="RNase_PH_PNPase_2"/>
    <property type="match status" value="1"/>
</dbReference>
<dbReference type="CDD" id="cd04472">
    <property type="entry name" value="S1_PNPase"/>
    <property type="match status" value="1"/>
</dbReference>
<dbReference type="FunFam" id="3.30.1370.10:FF:000001">
    <property type="entry name" value="Polyribonucleotide nucleotidyltransferase"/>
    <property type="match status" value="1"/>
</dbReference>
<dbReference type="FunFam" id="3.30.230.70:FF:000001">
    <property type="entry name" value="Polyribonucleotide nucleotidyltransferase"/>
    <property type="match status" value="1"/>
</dbReference>
<dbReference type="FunFam" id="3.30.230.70:FF:000002">
    <property type="entry name" value="Polyribonucleotide nucleotidyltransferase"/>
    <property type="match status" value="1"/>
</dbReference>
<dbReference type="FunFam" id="2.40.50.140:FF:000189">
    <property type="entry name" value="Polyribonucleotide nucleotidyltransferase, putative"/>
    <property type="match status" value="1"/>
</dbReference>
<dbReference type="Gene3D" id="3.30.230.70">
    <property type="entry name" value="GHMP Kinase, N-terminal domain"/>
    <property type="match status" value="2"/>
</dbReference>
<dbReference type="Gene3D" id="3.30.1370.10">
    <property type="entry name" value="K Homology domain, type 1"/>
    <property type="match status" value="1"/>
</dbReference>
<dbReference type="Gene3D" id="2.40.50.140">
    <property type="entry name" value="Nucleic acid-binding proteins"/>
    <property type="match status" value="1"/>
</dbReference>
<dbReference type="HAMAP" id="MF_01595">
    <property type="entry name" value="PNPase"/>
    <property type="match status" value="1"/>
</dbReference>
<dbReference type="InterPro" id="IPR001247">
    <property type="entry name" value="ExoRNase_PH_dom1"/>
</dbReference>
<dbReference type="InterPro" id="IPR015847">
    <property type="entry name" value="ExoRNase_PH_dom2"/>
</dbReference>
<dbReference type="InterPro" id="IPR036345">
    <property type="entry name" value="ExoRNase_PH_dom2_sf"/>
</dbReference>
<dbReference type="InterPro" id="IPR004087">
    <property type="entry name" value="KH_dom"/>
</dbReference>
<dbReference type="InterPro" id="IPR004088">
    <property type="entry name" value="KH_dom_type_1"/>
</dbReference>
<dbReference type="InterPro" id="IPR036612">
    <property type="entry name" value="KH_dom_type_1_sf"/>
</dbReference>
<dbReference type="InterPro" id="IPR012340">
    <property type="entry name" value="NA-bd_OB-fold"/>
</dbReference>
<dbReference type="InterPro" id="IPR012162">
    <property type="entry name" value="PNPase"/>
</dbReference>
<dbReference type="InterPro" id="IPR027408">
    <property type="entry name" value="PNPase/RNase_PH_dom_sf"/>
</dbReference>
<dbReference type="InterPro" id="IPR015848">
    <property type="entry name" value="PNPase_PH_RNA-bd_bac/org-type"/>
</dbReference>
<dbReference type="InterPro" id="IPR036456">
    <property type="entry name" value="PNPase_PH_RNA-bd_sf"/>
</dbReference>
<dbReference type="InterPro" id="IPR020568">
    <property type="entry name" value="Ribosomal_Su5_D2-typ_SF"/>
</dbReference>
<dbReference type="InterPro" id="IPR003029">
    <property type="entry name" value="S1_domain"/>
</dbReference>
<dbReference type="NCBIfam" id="TIGR03591">
    <property type="entry name" value="polynuc_phos"/>
    <property type="match status" value="1"/>
</dbReference>
<dbReference type="NCBIfam" id="NF008805">
    <property type="entry name" value="PRK11824.1"/>
    <property type="match status" value="1"/>
</dbReference>
<dbReference type="PANTHER" id="PTHR11252">
    <property type="entry name" value="POLYRIBONUCLEOTIDE NUCLEOTIDYLTRANSFERASE"/>
    <property type="match status" value="1"/>
</dbReference>
<dbReference type="PANTHER" id="PTHR11252:SF0">
    <property type="entry name" value="POLYRIBONUCLEOTIDE NUCLEOTIDYLTRANSFERASE 1, MITOCHONDRIAL"/>
    <property type="match status" value="1"/>
</dbReference>
<dbReference type="Pfam" id="PF00013">
    <property type="entry name" value="KH_1"/>
    <property type="match status" value="1"/>
</dbReference>
<dbReference type="Pfam" id="PF03726">
    <property type="entry name" value="PNPase"/>
    <property type="match status" value="1"/>
</dbReference>
<dbReference type="Pfam" id="PF01138">
    <property type="entry name" value="RNase_PH"/>
    <property type="match status" value="2"/>
</dbReference>
<dbReference type="Pfam" id="PF03725">
    <property type="entry name" value="RNase_PH_C"/>
    <property type="match status" value="2"/>
</dbReference>
<dbReference type="Pfam" id="PF00575">
    <property type="entry name" value="S1"/>
    <property type="match status" value="1"/>
</dbReference>
<dbReference type="PIRSF" id="PIRSF005499">
    <property type="entry name" value="PNPase"/>
    <property type="match status" value="1"/>
</dbReference>
<dbReference type="SMART" id="SM00322">
    <property type="entry name" value="KH"/>
    <property type="match status" value="1"/>
</dbReference>
<dbReference type="SMART" id="SM00316">
    <property type="entry name" value="S1"/>
    <property type="match status" value="1"/>
</dbReference>
<dbReference type="SUPFAM" id="SSF54791">
    <property type="entry name" value="Eukaryotic type KH-domain (KH-domain type I)"/>
    <property type="match status" value="1"/>
</dbReference>
<dbReference type="SUPFAM" id="SSF50249">
    <property type="entry name" value="Nucleic acid-binding proteins"/>
    <property type="match status" value="1"/>
</dbReference>
<dbReference type="SUPFAM" id="SSF46915">
    <property type="entry name" value="Polynucleotide phosphorylase/guanosine pentaphosphate synthase (PNPase/GPSI), domain 3"/>
    <property type="match status" value="1"/>
</dbReference>
<dbReference type="SUPFAM" id="SSF55666">
    <property type="entry name" value="Ribonuclease PH domain 2-like"/>
    <property type="match status" value="2"/>
</dbReference>
<dbReference type="SUPFAM" id="SSF54211">
    <property type="entry name" value="Ribosomal protein S5 domain 2-like"/>
    <property type="match status" value="2"/>
</dbReference>
<dbReference type="PROSITE" id="PS50084">
    <property type="entry name" value="KH_TYPE_1"/>
    <property type="match status" value="1"/>
</dbReference>
<dbReference type="PROSITE" id="PS50126">
    <property type="entry name" value="S1"/>
    <property type="match status" value="1"/>
</dbReference>
<comment type="function">
    <text evidence="1">Involved in mRNA degradation. Catalyzes the phosphorolysis of single-stranded polyribonucleotides processively in the 3'- to 5'-direction.</text>
</comment>
<comment type="catalytic activity">
    <reaction evidence="1">
        <text>RNA(n+1) + phosphate = RNA(n) + a ribonucleoside 5'-diphosphate</text>
        <dbReference type="Rhea" id="RHEA:22096"/>
        <dbReference type="Rhea" id="RHEA-COMP:14527"/>
        <dbReference type="Rhea" id="RHEA-COMP:17342"/>
        <dbReference type="ChEBI" id="CHEBI:43474"/>
        <dbReference type="ChEBI" id="CHEBI:57930"/>
        <dbReference type="ChEBI" id="CHEBI:140395"/>
        <dbReference type="EC" id="2.7.7.8"/>
    </reaction>
</comment>
<comment type="cofactor">
    <cofactor evidence="1">
        <name>Mg(2+)</name>
        <dbReference type="ChEBI" id="CHEBI:18420"/>
    </cofactor>
</comment>
<comment type="subcellular location">
    <subcellularLocation>
        <location evidence="1">Cytoplasm</location>
    </subcellularLocation>
</comment>
<comment type="similarity">
    <text evidence="1">Belongs to the polyribonucleotide nucleotidyltransferase family.</text>
</comment>